<dbReference type="EC" id="1.8.1.9"/>
<dbReference type="EMBL" id="AF532987">
    <property type="protein sequence ID" value="AAP72146.1"/>
    <property type="molecule type" value="mRNA"/>
</dbReference>
<dbReference type="EMBL" id="AF541944">
    <property type="protein sequence ID" value="AAP72148.1"/>
    <property type="molecule type" value="Genomic_DNA"/>
</dbReference>
<dbReference type="SMR" id="Q7Z7S3"/>
<dbReference type="VEuPathDB" id="FungiDB:T552_01256"/>
<dbReference type="GO" id="GO:0005737">
    <property type="term" value="C:cytoplasm"/>
    <property type="evidence" value="ECO:0007669"/>
    <property type="project" value="UniProtKB-SubCell"/>
</dbReference>
<dbReference type="GO" id="GO:0004791">
    <property type="term" value="F:thioredoxin-disulfide reductase (NADPH) activity"/>
    <property type="evidence" value="ECO:0007669"/>
    <property type="project" value="UniProtKB-EC"/>
</dbReference>
<dbReference type="GO" id="GO:0019430">
    <property type="term" value="P:removal of superoxide radicals"/>
    <property type="evidence" value="ECO:0007669"/>
    <property type="project" value="InterPro"/>
</dbReference>
<dbReference type="FunFam" id="3.50.50.60:FF:000064">
    <property type="entry name" value="Thioredoxin reductase"/>
    <property type="match status" value="1"/>
</dbReference>
<dbReference type="Gene3D" id="3.50.50.60">
    <property type="entry name" value="FAD/NAD(P)-binding domain"/>
    <property type="match status" value="2"/>
</dbReference>
<dbReference type="InterPro" id="IPR036188">
    <property type="entry name" value="FAD/NAD-bd_sf"/>
</dbReference>
<dbReference type="InterPro" id="IPR023753">
    <property type="entry name" value="FAD/NAD-binding_dom"/>
</dbReference>
<dbReference type="InterPro" id="IPR050097">
    <property type="entry name" value="Ferredoxin-NADP_redctase_2"/>
</dbReference>
<dbReference type="InterPro" id="IPR008255">
    <property type="entry name" value="Pyr_nucl-diS_OxRdtase_2_AS"/>
</dbReference>
<dbReference type="InterPro" id="IPR005982">
    <property type="entry name" value="Thioredox_Rdtase"/>
</dbReference>
<dbReference type="NCBIfam" id="TIGR01292">
    <property type="entry name" value="TRX_reduct"/>
    <property type="match status" value="1"/>
</dbReference>
<dbReference type="PANTHER" id="PTHR48105">
    <property type="entry name" value="THIOREDOXIN REDUCTASE 1-RELATED-RELATED"/>
    <property type="match status" value="1"/>
</dbReference>
<dbReference type="Pfam" id="PF07992">
    <property type="entry name" value="Pyr_redox_2"/>
    <property type="match status" value="1"/>
</dbReference>
<dbReference type="PRINTS" id="PR00368">
    <property type="entry name" value="FADPNR"/>
</dbReference>
<dbReference type="PRINTS" id="PR00469">
    <property type="entry name" value="PNDRDTASEII"/>
</dbReference>
<dbReference type="SUPFAM" id="SSF51905">
    <property type="entry name" value="FAD/NAD(P)-binding domain"/>
    <property type="match status" value="1"/>
</dbReference>
<dbReference type="PROSITE" id="PS00573">
    <property type="entry name" value="PYRIDINE_REDOX_2"/>
    <property type="match status" value="1"/>
</dbReference>
<name>TRXB_PNECA</name>
<reference key="1">
    <citation type="journal article" date="2003" name="Gene">
        <title>Characterization of thioredoxin reductase genes (trr1) from Pneumocystis carinii and Pneumocystis jiroveci.</title>
        <authorList>
            <person name="Kutty G.K."/>
            <person name="Huang S.N."/>
            <person name="Kovacs J.A."/>
        </authorList>
    </citation>
    <scope>NUCLEOTIDE SEQUENCE [GENOMIC DNA / MRNA]</scope>
</reference>
<sequence length="325" mass="35282">MHSKVVIIGSGPSGHTAAIYLGRAELKPILYEGMLANGIAPGGQLTTTTDVENYPGFPDGILGPSLMEAFRKQSEKYGAQIITDTVSKLDLSKRPFKYCCESNEEVFHTADVVILATGAYARRLNIPGEEIYWQRGISACAVCDGAAPIFRGKPLAVVGGGDSAAEESLFLTRYATKVYLLVRRDKLRASPIMAKRLLHHPKIEILWNTVALESLGDNNLMNCVKIKNVKTQEVSELQVNGLFYAIGHEPATTLVRGQVECDKDGYIITKNGGPETNIKGFFAAGDVQDKKWRQAVTSAGSGCMAGLAAERLLAEEEEMKNIEDS</sequence>
<organism>
    <name type="scientific">Pneumocystis carinii</name>
    <dbReference type="NCBI Taxonomy" id="4754"/>
    <lineage>
        <taxon>Eukaryota</taxon>
        <taxon>Fungi</taxon>
        <taxon>Dikarya</taxon>
        <taxon>Ascomycota</taxon>
        <taxon>Taphrinomycotina</taxon>
        <taxon>Pneumocystomycetes</taxon>
        <taxon>Pneumocystaceae</taxon>
        <taxon>Pneumocystis</taxon>
    </lineage>
</organism>
<comment type="catalytic activity">
    <reaction>
        <text>[thioredoxin]-dithiol + NADP(+) = [thioredoxin]-disulfide + NADPH + H(+)</text>
        <dbReference type="Rhea" id="RHEA:20345"/>
        <dbReference type="Rhea" id="RHEA-COMP:10698"/>
        <dbReference type="Rhea" id="RHEA-COMP:10700"/>
        <dbReference type="ChEBI" id="CHEBI:15378"/>
        <dbReference type="ChEBI" id="CHEBI:29950"/>
        <dbReference type="ChEBI" id="CHEBI:50058"/>
        <dbReference type="ChEBI" id="CHEBI:57783"/>
        <dbReference type="ChEBI" id="CHEBI:58349"/>
        <dbReference type="EC" id="1.8.1.9"/>
    </reaction>
</comment>
<comment type="cofactor">
    <cofactor evidence="1">
        <name>FAD</name>
        <dbReference type="ChEBI" id="CHEBI:57692"/>
    </cofactor>
    <text evidence="1">Binds 1 FAD per subunit.</text>
</comment>
<comment type="subunit">
    <text evidence="1">Homodimer.</text>
</comment>
<comment type="subcellular location">
    <subcellularLocation>
        <location evidence="1">Cytoplasm</location>
    </subcellularLocation>
</comment>
<comment type="miscellaneous">
    <text>The active site is a redox-active disulfide bond.</text>
</comment>
<comment type="similarity">
    <text evidence="2">Belongs to the class-II pyridine nucleotide-disulfide oxidoreductase family.</text>
</comment>
<accession>Q7Z7S3</accession>
<feature type="chain" id="PRO_0000166766" description="Thioredoxin reductase">
    <location>
        <begin position="1"/>
        <end position="325"/>
    </location>
</feature>
<feature type="binding site" evidence="1">
    <location>
        <begin position="10"/>
        <end position="13"/>
    </location>
    <ligand>
        <name>FAD</name>
        <dbReference type="ChEBI" id="CHEBI:57692"/>
    </ligand>
</feature>
<feature type="binding site" evidence="1">
    <location>
        <begin position="39"/>
        <end position="40"/>
    </location>
    <ligand>
        <name>FAD</name>
        <dbReference type="ChEBI" id="CHEBI:57692"/>
    </ligand>
</feature>
<feature type="binding site" evidence="1">
    <location>
        <position position="44"/>
    </location>
    <ligand>
        <name>FAD</name>
        <dbReference type="ChEBI" id="CHEBI:57692"/>
    </ligand>
</feature>
<feature type="binding site" evidence="1">
    <location>
        <position position="53"/>
    </location>
    <ligand>
        <name>FAD</name>
        <dbReference type="ChEBI" id="CHEBI:57692"/>
    </ligand>
</feature>
<feature type="binding site" evidence="1">
    <location>
        <position position="86"/>
    </location>
    <ligand>
        <name>FAD</name>
        <dbReference type="ChEBI" id="CHEBI:57692"/>
    </ligand>
</feature>
<feature type="binding site" evidence="1">
    <location>
        <position position="143"/>
    </location>
    <ligand>
        <name>FAD</name>
        <dbReference type="ChEBI" id="CHEBI:57692"/>
    </ligand>
</feature>
<feature type="binding site" evidence="1">
    <location>
        <position position="286"/>
    </location>
    <ligand>
        <name>FAD</name>
        <dbReference type="ChEBI" id="CHEBI:57692"/>
    </ligand>
</feature>
<feature type="binding site" evidence="1">
    <location>
        <begin position="293"/>
        <end position="295"/>
    </location>
    <ligand>
        <name>FAD</name>
        <dbReference type="ChEBI" id="CHEBI:57692"/>
    </ligand>
</feature>
<feature type="disulfide bond" description="Redox-active" evidence="1">
    <location>
        <begin position="140"/>
        <end position="143"/>
    </location>
</feature>
<protein>
    <recommendedName>
        <fullName>Thioredoxin reductase</fullName>
        <ecNumber>1.8.1.9</ecNumber>
    </recommendedName>
</protein>
<gene>
    <name type="primary">TRR1</name>
</gene>
<keyword id="KW-0963">Cytoplasm</keyword>
<keyword id="KW-1015">Disulfide bond</keyword>
<keyword id="KW-0274">FAD</keyword>
<keyword id="KW-0285">Flavoprotein</keyword>
<keyword id="KW-0521">NADP</keyword>
<keyword id="KW-0560">Oxidoreductase</keyword>
<keyword id="KW-0676">Redox-active center</keyword>
<proteinExistence type="evidence at transcript level"/>
<evidence type="ECO:0000250" key="1">
    <source>
        <dbReference type="UniProtKB" id="P29509"/>
    </source>
</evidence>
<evidence type="ECO:0000305" key="2"/>